<feature type="chain" id="PRO_0000047900" description="DNA-directed RNA polymerase subunit beta">
    <location>
        <begin position="1"/>
        <end position="1208"/>
    </location>
</feature>
<sequence>MKSLAGHVVKYGKHRERKSFARISEVLELPNLIEIQTDSYQWFLDEGLREMFEDILPIDDFNGNLSLEFVDYELKEPKYTVAEARAHDANYSAPLHVTLRLTNRETGEIKAQEVFFGDFPLMTEQGTFIINGAERVIVSQLVRSPGVYFHGKVDKNGKEGFGSTVIPNRGAWLEMETDAKDISYVRIDRTRKIPLTVLVRALGFGSDDTIFEIFGDSETLRNTVEKDLHKNASDSRTEEGLKDVYERLRPGEPKTADSSRNLLNARFFDPKRYDLANVGRYKVNKKLDLKTRLLNLTLAETLVDPETGEIIVEKGTVLTHQVMETLAPFIDNGLNSVTYYPSEDGVVTDPMTVQVIKVFSPKDPEREVNVIGNGYPESAVKTVRPADIIASMSYFLNLMEGIGNVDDIDHLGNRRIRSVGELLQNQFRIGLARMERVVRERMSIQDTETLTPQQLINIRPVVASIKEFFGSSQLSQFMDQTNPLGELTHKRRLSALGPGGLTRDRAGYEVRDVHYSHYGRMCPIETPEGPNIGLINSLSSYAKVNKFGFIETPYRRVDRETGRVTDQIDYLTADIEDHYIVAQANSPLNEDGTFAQDVVMARAQSENLEVSIDKVDYMDVSPKQVVAVATACIPFLENDDSNRALMGANMQRQAVPLINPQAPWVGTGMEYKSAHDSGAALLCKHDGVVEFVDASEIRVRRDNGALDKYAVTKFRRSNSGTSYNQRPIVHLGEKVEKGDTLADGPSMEQGEMALGQNVLVGFMTWEGYNYEDAIIMSRRLVKDDVYTSIHIEEYESEARDTKLGPEEITREIPNVGEDALKDLDEMGIIRIGAEVQDGDLLVGKVTPKGVTELSAEERLLHAIFGEKAREVRDTSLRVPHGGGGIVHDVKIFTREAGDELSPGVNMLVRVYIVQKRKIHEGDKMAGRHGNKGVVSRIMPEEDMPFLPDGTPIDIMLNPLGVPSRMNIGQVLELHLGMAARQLGIHVATPVFDGASDEDVWETVREAGMASDAKTILYDGRTGEPFDGRVSVGVMYMIKLAHMVDDKLHARSIGPYSLVTQQPLGGKAQFGGQRFGEMEVWALEAYGAAYTLQEILTYKSDDVVGRVKTYEAIVKGEPIPKPGVPESFRVLVKELQSLGLDMRVLDIKDSEIELRDMDDEDDDLITVDALTKFAEQQTAKELEKKAAEQVEDERQDIIQNFETAEDNLD</sequence>
<dbReference type="EC" id="2.7.7.6" evidence="1"/>
<dbReference type="EMBL" id="AY167140">
    <property type="protein sequence ID" value="AAO00730.1"/>
    <property type="molecule type" value="Genomic_DNA"/>
</dbReference>
<dbReference type="SMR" id="Q8GCR4"/>
<dbReference type="GO" id="GO:0000428">
    <property type="term" value="C:DNA-directed RNA polymerase complex"/>
    <property type="evidence" value="ECO:0007669"/>
    <property type="project" value="UniProtKB-KW"/>
</dbReference>
<dbReference type="GO" id="GO:0003677">
    <property type="term" value="F:DNA binding"/>
    <property type="evidence" value="ECO:0007669"/>
    <property type="project" value="UniProtKB-UniRule"/>
</dbReference>
<dbReference type="GO" id="GO:0003899">
    <property type="term" value="F:DNA-directed RNA polymerase activity"/>
    <property type="evidence" value="ECO:0007669"/>
    <property type="project" value="UniProtKB-UniRule"/>
</dbReference>
<dbReference type="GO" id="GO:0032549">
    <property type="term" value="F:ribonucleoside binding"/>
    <property type="evidence" value="ECO:0007669"/>
    <property type="project" value="InterPro"/>
</dbReference>
<dbReference type="GO" id="GO:0006351">
    <property type="term" value="P:DNA-templated transcription"/>
    <property type="evidence" value="ECO:0007669"/>
    <property type="project" value="UniProtKB-UniRule"/>
</dbReference>
<dbReference type="CDD" id="cd00653">
    <property type="entry name" value="RNA_pol_B_RPB2"/>
    <property type="match status" value="1"/>
</dbReference>
<dbReference type="FunFam" id="3.90.1800.10:FF:000001">
    <property type="entry name" value="DNA-directed RNA polymerase subunit beta"/>
    <property type="match status" value="1"/>
</dbReference>
<dbReference type="Gene3D" id="2.40.50.100">
    <property type="match status" value="1"/>
</dbReference>
<dbReference type="Gene3D" id="2.40.50.150">
    <property type="match status" value="1"/>
</dbReference>
<dbReference type="Gene3D" id="3.90.1100.10">
    <property type="match status" value="2"/>
</dbReference>
<dbReference type="Gene3D" id="2.30.150.10">
    <property type="entry name" value="DNA-directed RNA polymerase, beta subunit, external 1 domain"/>
    <property type="match status" value="1"/>
</dbReference>
<dbReference type="Gene3D" id="2.40.270.10">
    <property type="entry name" value="DNA-directed RNA polymerase, subunit 2, domain 6"/>
    <property type="match status" value="1"/>
</dbReference>
<dbReference type="Gene3D" id="3.90.1800.10">
    <property type="entry name" value="RNA polymerase alpha subunit dimerisation domain"/>
    <property type="match status" value="1"/>
</dbReference>
<dbReference type="Gene3D" id="3.90.1110.10">
    <property type="entry name" value="RNA polymerase Rpb2, domain 2"/>
    <property type="match status" value="1"/>
</dbReference>
<dbReference type="HAMAP" id="MF_01321">
    <property type="entry name" value="RNApol_bact_RpoB"/>
    <property type="match status" value="1"/>
</dbReference>
<dbReference type="InterPro" id="IPR042107">
    <property type="entry name" value="DNA-dir_RNA_pol_bsu_ext_1_sf"/>
</dbReference>
<dbReference type="InterPro" id="IPR019462">
    <property type="entry name" value="DNA-dir_RNA_pol_bsu_external_1"/>
</dbReference>
<dbReference type="InterPro" id="IPR015712">
    <property type="entry name" value="DNA-dir_RNA_pol_su2"/>
</dbReference>
<dbReference type="InterPro" id="IPR007120">
    <property type="entry name" value="DNA-dir_RNAP_su2_dom"/>
</dbReference>
<dbReference type="InterPro" id="IPR037033">
    <property type="entry name" value="DNA-dir_RNAP_su2_hyb_sf"/>
</dbReference>
<dbReference type="InterPro" id="IPR010243">
    <property type="entry name" value="RNA_pol_bsu_bac"/>
</dbReference>
<dbReference type="InterPro" id="IPR007121">
    <property type="entry name" value="RNA_pol_bsu_CS"/>
</dbReference>
<dbReference type="InterPro" id="IPR007644">
    <property type="entry name" value="RNA_pol_bsu_protrusion"/>
</dbReference>
<dbReference type="InterPro" id="IPR007642">
    <property type="entry name" value="RNA_pol_Rpb2_2"/>
</dbReference>
<dbReference type="InterPro" id="IPR037034">
    <property type="entry name" value="RNA_pol_Rpb2_2_sf"/>
</dbReference>
<dbReference type="InterPro" id="IPR007645">
    <property type="entry name" value="RNA_pol_Rpb2_3"/>
</dbReference>
<dbReference type="InterPro" id="IPR007641">
    <property type="entry name" value="RNA_pol_Rpb2_7"/>
</dbReference>
<dbReference type="InterPro" id="IPR014724">
    <property type="entry name" value="RNA_pol_RPB2_OB-fold"/>
</dbReference>
<dbReference type="NCBIfam" id="NF001616">
    <property type="entry name" value="PRK00405.1"/>
    <property type="match status" value="1"/>
</dbReference>
<dbReference type="NCBIfam" id="TIGR02013">
    <property type="entry name" value="rpoB"/>
    <property type="match status" value="1"/>
</dbReference>
<dbReference type="PANTHER" id="PTHR20856">
    <property type="entry name" value="DNA-DIRECTED RNA POLYMERASE I SUBUNIT 2"/>
    <property type="match status" value="1"/>
</dbReference>
<dbReference type="Pfam" id="PF04563">
    <property type="entry name" value="RNA_pol_Rpb2_1"/>
    <property type="match status" value="1"/>
</dbReference>
<dbReference type="Pfam" id="PF04561">
    <property type="entry name" value="RNA_pol_Rpb2_2"/>
    <property type="match status" value="2"/>
</dbReference>
<dbReference type="Pfam" id="PF04565">
    <property type="entry name" value="RNA_pol_Rpb2_3"/>
    <property type="match status" value="1"/>
</dbReference>
<dbReference type="Pfam" id="PF10385">
    <property type="entry name" value="RNA_pol_Rpb2_45"/>
    <property type="match status" value="1"/>
</dbReference>
<dbReference type="Pfam" id="PF00562">
    <property type="entry name" value="RNA_pol_Rpb2_6"/>
    <property type="match status" value="1"/>
</dbReference>
<dbReference type="Pfam" id="PF04560">
    <property type="entry name" value="RNA_pol_Rpb2_7"/>
    <property type="match status" value="1"/>
</dbReference>
<dbReference type="SUPFAM" id="SSF64484">
    <property type="entry name" value="beta and beta-prime subunits of DNA dependent RNA-polymerase"/>
    <property type="match status" value="1"/>
</dbReference>
<dbReference type="PROSITE" id="PS01166">
    <property type="entry name" value="RNA_POL_BETA"/>
    <property type="match status" value="1"/>
</dbReference>
<protein>
    <recommendedName>
        <fullName evidence="1">DNA-directed RNA polymerase subunit beta</fullName>
        <shortName evidence="1">RNAP subunit beta</shortName>
        <ecNumber evidence="1">2.7.7.6</ecNumber>
    </recommendedName>
    <alternativeName>
        <fullName evidence="1">RNA polymerase subunit beta</fullName>
    </alternativeName>
    <alternativeName>
        <fullName evidence="1">Transcriptase subunit beta</fullName>
    </alternativeName>
</protein>
<evidence type="ECO:0000255" key="1">
    <source>
        <dbReference type="HAMAP-Rule" id="MF_01321"/>
    </source>
</evidence>
<organism>
    <name type="scientific">Enterococcus faecium</name>
    <name type="common">Streptococcus faecium</name>
    <dbReference type="NCBI Taxonomy" id="1352"/>
    <lineage>
        <taxon>Bacteria</taxon>
        <taxon>Bacillati</taxon>
        <taxon>Bacillota</taxon>
        <taxon>Bacilli</taxon>
        <taxon>Lactobacillales</taxon>
        <taxon>Enterococcaceae</taxon>
        <taxon>Enterococcus</taxon>
    </lineage>
</organism>
<name>RPOB2_ENTFC</name>
<proteinExistence type="inferred from homology"/>
<keyword id="KW-0240">DNA-directed RNA polymerase</keyword>
<keyword id="KW-0548">Nucleotidyltransferase</keyword>
<keyword id="KW-0804">Transcription</keyword>
<keyword id="KW-0808">Transferase</keyword>
<accession>Q8GCR4</accession>
<reference key="1">
    <citation type="submission" date="2002-10" db="EMBL/GenBank/DDBJ databases">
        <title>Rifampin resistance and its fitness cost in Enterococcus faecium.</title>
        <authorList>
            <person name="Enne V.I."/>
            <person name="Bennett P.M."/>
        </authorList>
    </citation>
    <scope>NUCLEOTIDE SEQUENCE [GENOMIC DNA]</scope>
    <source>
        <strain>40-4</strain>
    </source>
</reference>
<comment type="function">
    <text evidence="1">DNA-dependent RNA polymerase catalyzes the transcription of DNA into RNA using the four ribonucleoside triphosphates as substrates.</text>
</comment>
<comment type="catalytic activity">
    <reaction evidence="1">
        <text>RNA(n) + a ribonucleoside 5'-triphosphate = RNA(n+1) + diphosphate</text>
        <dbReference type="Rhea" id="RHEA:21248"/>
        <dbReference type="Rhea" id="RHEA-COMP:14527"/>
        <dbReference type="Rhea" id="RHEA-COMP:17342"/>
        <dbReference type="ChEBI" id="CHEBI:33019"/>
        <dbReference type="ChEBI" id="CHEBI:61557"/>
        <dbReference type="ChEBI" id="CHEBI:140395"/>
        <dbReference type="EC" id="2.7.7.6"/>
    </reaction>
</comment>
<comment type="subunit">
    <text evidence="1">The RNAP catalytic core consists of 2 alpha, 1 beta, 1 beta' and 1 omega subunit. When a sigma factor is associated with the core the holoenzyme is formed, which can initiate transcription.</text>
</comment>
<comment type="similarity">
    <text evidence="1">Belongs to the RNA polymerase beta chain family.</text>
</comment>
<gene>
    <name evidence="1" type="primary">rpoB</name>
</gene>